<gene>
    <name evidence="3" type="primary">tgnD</name>
    <name evidence="5" type="ordered locus">ACIAD2545</name>
</gene>
<comment type="function">
    <text evidence="2">Involved in the degradation of the pyridine ring of trigonelline (TG; N-methylnicotinate) into succinate and methylamine as carbon and nitrogen sources, respectively. Catalyzes the hydrolysis of (E)-2-((N-methylformamido)methylene)succinate (MFMS) into formic acid, succinate semialdehyde (SSA), methylamine and carbon dioxide.</text>
</comment>
<comment type="catalytic activity">
    <reaction evidence="2">
        <text>(E)-2-((N-methylformamido) methylene)succinate + 2 H2O + H(+) = succinate semialdehyde + methylamine + formate + CO2</text>
        <dbReference type="Rhea" id="RHEA:57032"/>
        <dbReference type="ChEBI" id="CHEBI:15377"/>
        <dbReference type="ChEBI" id="CHEBI:15378"/>
        <dbReference type="ChEBI" id="CHEBI:15740"/>
        <dbReference type="ChEBI" id="CHEBI:16526"/>
        <dbReference type="ChEBI" id="CHEBI:57706"/>
        <dbReference type="ChEBI" id="CHEBI:59338"/>
        <dbReference type="ChEBI" id="CHEBI:141414"/>
    </reaction>
</comment>
<comment type="biophysicochemical properties">
    <kinetics>
        <KM evidence="2">222 uM for (E)-2-((N-methylformamido)methylene)succinate (MFMS)</KM>
        <text evidence="2">kcat is 112.3 sec(-1) for (E)-2-((N-methylformamido)methylene)succinate (MFMS) as substrate.</text>
    </kinetics>
</comment>
<comment type="subunit">
    <text evidence="2">Monomer.</text>
</comment>
<comment type="similarity">
    <text evidence="4">Belongs to the AB hydrolase superfamily.</text>
</comment>
<accession>Q6F9F4</accession>
<evidence type="ECO:0000250" key="1">
    <source>
        <dbReference type="UniProtKB" id="Q988D4"/>
    </source>
</evidence>
<evidence type="ECO:0000269" key="2">
    <source>
    </source>
</evidence>
<evidence type="ECO:0000303" key="3">
    <source>
    </source>
</evidence>
<evidence type="ECO:0000305" key="4"/>
<evidence type="ECO:0000312" key="5">
    <source>
        <dbReference type="EMBL" id="CAG69310.1"/>
    </source>
</evidence>
<evidence type="ECO:0000312" key="6">
    <source>
        <dbReference type="Proteomes" id="UP000000430"/>
    </source>
</evidence>
<reference key="1">
    <citation type="journal article" date="2004" name="Nucleic Acids Res.">
        <title>Unique features revealed by the genome sequence of Acinetobacter sp. ADP1, a versatile and naturally transformation competent bacterium.</title>
        <authorList>
            <person name="Barbe V."/>
            <person name="Vallenet D."/>
            <person name="Fonknechten N."/>
            <person name="Kreimeyer A."/>
            <person name="Oztas S."/>
            <person name="Labarre L."/>
            <person name="Cruveiller S."/>
            <person name="Robert C."/>
            <person name="Duprat S."/>
            <person name="Wincker P."/>
            <person name="Ornston L.N."/>
            <person name="Weissenbach J."/>
            <person name="Marliere P."/>
            <person name="Cohen G.N."/>
            <person name="Medigue C."/>
        </authorList>
    </citation>
    <scope>NUCLEOTIDE SEQUENCE [LARGE SCALE GENOMIC DNA]</scope>
    <source>
        <strain evidence="6">ATCC 33305 / BD413 / ADP1</strain>
    </source>
</reference>
<reference key="2">
    <citation type="journal article" date="2018" name="Proc. Natl. Acad. Sci. U.S.A.">
        <title>Elucidation of the trigonelline degradation pathway reveals previously undescribed enzymes and metabolites.</title>
        <authorList>
            <person name="Perchat N."/>
            <person name="Saaidi P.L."/>
            <person name="Darii E."/>
            <person name="Pelle C."/>
            <person name="Petit J.L."/>
            <person name="Besnard-Gonnet M."/>
            <person name="de Berardinis V."/>
            <person name="Dupont M."/>
            <person name="Gimbernat A."/>
            <person name="Salanoubat M."/>
            <person name="Fischer C."/>
            <person name="Perret A."/>
        </authorList>
    </citation>
    <scope>FUNCTION</scope>
    <scope>CATALYTIC ACTIVITY</scope>
    <scope>BIOPHYSICOCHEMICAL PROPERTIES</scope>
    <scope>SUBUNIT</scope>
    <source>
        <strain>ATCC 33305 / BD413 / ADP1</strain>
    </source>
</reference>
<name>TGND_ACIAD</name>
<dbReference type="EC" id="3.5.1.-" evidence="2"/>
<dbReference type="EMBL" id="CR543861">
    <property type="protein sequence ID" value="CAG69310.1"/>
    <property type="molecule type" value="Genomic_DNA"/>
</dbReference>
<dbReference type="RefSeq" id="WP_004928629.1">
    <property type="nucleotide sequence ID" value="NC_005966.1"/>
</dbReference>
<dbReference type="SMR" id="Q6F9F4"/>
<dbReference type="STRING" id="202950.GCA_001485005_01472"/>
<dbReference type="ESTHER" id="aciad-q6f9f4">
    <property type="family name" value="6_AlphaBeta_hydrolase"/>
</dbReference>
<dbReference type="GeneID" id="45234829"/>
<dbReference type="KEGG" id="aci:ACIAD2545"/>
<dbReference type="eggNOG" id="COG2267">
    <property type="taxonomic scope" value="Bacteria"/>
</dbReference>
<dbReference type="HOGENOM" id="CLU_020336_50_3_6"/>
<dbReference type="OrthoDB" id="5853561at2"/>
<dbReference type="BioCyc" id="ASP62977:ACIAD_RS11560-MONOMER"/>
<dbReference type="SABIO-RK" id="Q6F9F4"/>
<dbReference type="Proteomes" id="UP000000430">
    <property type="component" value="Chromosome"/>
</dbReference>
<dbReference type="GO" id="GO:0016810">
    <property type="term" value="F:hydrolase activity, acting on carbon-nitrogen (but not peptide) bonds"/>
    <property type="evidence" value="ECO:0000314"/>
    <property type="project" value="UniProtKB"/>
</dbReference>
<dbReference type="Gene3D" id="3.40.50.1820">
    <property type="entry name" value="alpha/beta hydrolase"/>
    <property type="match status" value="1"/>
</dbReference>
<dbReference type="InterPro" id="IPR000073">
    <property type="entry name" value="AB_hydrolase_1"/>
</dbReference>
<dbReference type="InterPro" id="IPR029058">
    <property type="entry name" value="AB_hydrolase_fold"/>
</dbReference>
<dbReference type="InterPro" id="IPR050266">
    <property type="entry name" value="AB_hydrolase_sf"/>
</dbReference>
<dbReference type="PANTHER" id="PTHR43798">
    <property type="entry name" value="MONOACYLGLYCEROL LIPASE"/>
    <property type="match status" value="1"/>
</dbReference>
<dbReference type="Pfam" id="PF12697">
    <property type="entry name" value="Abhydrolase_6"/>
    <property type="match status" value="1"/>
</dbReference>
<dbReference type="PRINTS" id="PR00111">
    <property type="entry name" value="ABHYDROLASE"/>
</dbReference>
<dbReference type="SUPFAM" id="SSF53474">
    <property type="entry name" value="alpha/beta-Hydrolases"/>
    <property type="match status" value="1"/>
</dbReference>
<sequence>MISKTLQLSNNRTAHYFEQGEGEPLVLIHGVGMQAEAWYPQIEYFSKHYHVISLDMPGHGQSTALAADAQLQDFVDWAIECIHTLNLGPVNLAGHSMGSLITTGVSVTRPDLVKRMAVLNGVYKRTHAAREAVIQRAEALKQGHLDIETPLQRWFGQSEIEKIASERVKLWLENVNMSGYTTAYRAFAQGDLVYADGWSDIECPALVLTGTDDPNSTAEMTIQMAHQAKHGTAIVIENERHMVNLTAPEKVNQAMQAWLETTP</sequence>
<keyword id="KW-0378">Hydrolase</keyword>
<organism>
    <name type="scientific">Acinetobacter baylyi (strain ATCC 33305 / BD413 / ADP1)</name>
    <dbReference type="NCBI Taxonomy" id="62977"/>
    <lineage>
        <taxon>Bacteria</taxon>
        <taxon>Pseudomonadati</taxon>
        <taxon>Pseudomonadota</taxon>
        <taxon>Gammaproteobacteria</taxon>
        <taxon>Moraxellales</taxon>
        <taxon>Moraxellaceae</taxon>
        <taxon>Acinetobacter</taxon>
    </lineage>
</organism>
<feature type="chain" id="PRO_0000445261" description="(E)-2-((N-methylformamido)methylene)succinate hydrolase">
    <location>
        <begin position="1"/>
        <end position="263"/>
    </location>
</feature>
<feature type="active site" description="Nucleophile" evidence="1">
    <location>
        <position position="96"/>
    </location>
</feature>
<feature type="active site" evidence="1">
    <location>
        <position position="120"/>
    </location>
</feature>
<feature type="active site" evidence="1">
    <location>
        <position position="241"/>
    </location>
</feature>
<proteinExistence type="evidence at protein level"/>
<protein>
    <recommendedName>
        <fullName evidence="3">(E)-2-((N-methylformamido)methylene)succinate hydrolase</fullName>
        <shortName evidence="3">MFMS hydrolase</shortName>
        <ecNumber evidence="2">3.5.1.-</ecNumber>
    </recommendedName>
</protein>